<reference key="1">
    <citation type="journal article" date="1988" name="J. Mol. Biol.">
        <title>Structure and organization of Marchantia polymorpha chloroplast genome. III. Gene organization of the large single copy region from rbcL to trnI(CAU).</title>
        <authorList>
            <person name="Fukuzawa H."/>
            <person name="Kohchi T."/>
            <person name="Sano T."/>
            <person name="Shirai H."/>
            <person name="Umesono K."/>
            <person name="Inokuchi H."/>
            <person name="Ozeki H."/>
            <person name="Ohyama K."/>
        </authorList>
    </citation>
    <scope>NUCLEOTIDE SEQUENCE [GENOMIC DNA]</scope>
</reference>
<reference key="2">
    <citation type="journal article" date="1986" name="Nature">
        <title>Chloroplast gene organization deduced from complete sequence of liverwort Marchantia polymorpha chloroplast DNA.</title>
        <authorList>
            <person name="Ohyama K."/>
            <person name="Fukuzawa H."/>
            <person name="Kohchi T."/>
            <person name="Shirai H."/>
            <person name="Sano T."/>
            <person name="Sano S."/>
            <person name="Umesono K."/>
            <person name="Shiki Y."/>
            <person name="Takeuchi M."/>
            <person name="Chang Z."/>
            <person name="Aota S."/>
            <person name="Inokuchi H."/>
            <person name="Ozeki H."/>
        </authorList>
    </citation>
    <scope>NUCLEOTIDE SEQUENCE [LARGE SCALE GENOMIC DNA]</scope>
</reference>
<reference key="3">
    <citation type="journal article" date="1986" name="FEBS Lett.">
        <title>Coding sequences for chloroplast ribosomal protein S12 from the liverwort, Marchantia polymorpha, are separated far apart on the different DNA strands.</title>
        <authorList>
            <person name="Fukuzawa H."/>
            <person name="Kohchi T."/>
            <person name="Shirai H."/>
            <person name="Ohyama K."/>
            <person name="Umesono K."/>
            <person name="Inokuchi H."/>
            <person name="Ozeki H."/>
        </authorList>
    </citation>
    <scope>NUCLEOTIDE SEQUENCE [GENOMIC DNA] OF 1-57</scope>
</reference>
<evidence type="ECO:0000250" key="1"/>
<evidence type="ECO:0000305" key="2"/>
<organism>
    <name type="scientific">Marchantia polymorpha</name>
    <name type="common">Common liverwort</name>
    <name type="synonym">Marchantia aquatica</name>
    <dbReference type="NCBI Taxonomy" id="3197"/>
    <lineage>
        <taxon>Eukaryota</taxon>
        <taxon>Viridiplantae</taxon>
        <taxon>Streptophyta</taxon>
        <taxon>Embryophyta</taxon>
        <taxon>Marchantiophyta</taxon>
        <taxon>Marchantiopsida</taxon>
        <taxon>Marchantiidae</taxon>
        <taxon>Marchantiales</taxon>
        <taxon>Marchantiaceae</taxon>
        <taxon>Marchantia</taxon>
    </lineage>
</organism>
<accession>P06385</accession>
<feature type="initiator methionine" description="Removed" evidence="1">
    <location>
        <position position="1"/>
    </location>
</feature>
<feature type="chain" id="PRO_0000177294" description="Large ribosomal subunit protein bL20c">
    <location>
        <begin position="2"/>
        <end position="116"/>
    </location>
</feature>
<keyword id="KW-0150">Chloroplast</keyword>
<keyword id="KW-0934">Plastid</keyword>
<keyword id="KW-0687">Ribonucleoprotein</keyword>
<keyword id="KW-0689">Ribosomal protein</keyword>
<keyword id="KW-0694">RNA-binding</keyword>
<keyword id="KW-0699">rRNA-binding</keyword>
<dbReference type="EMBL" id="X04465">
    <property type="protein sequence ID" value="CAA28108.1"/>
    <property type="molecule type" value="Genomic_DNA"/>
</dbReference>
<dbReference type="EMBL" id="X03661">
    <property type="protein sequence ID" value="CAA27298.1"/>
    <property type="molecule type" value="Genomic_DNA"/>
</dbReference>
<dbReference type="PIR" id="A02807">
    <property type="entry name" value="R5LV20"/>
</dbReference>
<dbReference type="RefSeq" id="NP_039322.1">
    <property type="nucleotide sequence ID" value="NC_001319.1"/>
</dbReference>
<dbReference type="SMR" id="P06385"/>
<dbReference type="GeneID" id="2702560"/>
<dbReference type="GO" id="GO:0009507">
    <property type="term" value="C:chloroplast"/>
    <property type="evidence" value="ECO:0007669"/>
    <property type="project" value="UniProtKB-SubCell"/>
</dbReference>
<dbReference type="GO" id="GO:1990904">
    <property type="term" value="C:ribonucleoprotein complex"/>
    <property type="evidence" value="ECO:0007669"/>
    <property type="project" value="UniProtKB-KW"/>
</dbReference>
<dbReference type="GO" id="GO:0005840">
    <property type="term" value="C:ribosome"/>
    <property type="evidence" value="ECO:0007669"/>
    <property type="project" value="UniProtKB-KW"/>
</dbReference>
<dbReference type="GO" id="GO:0019843">
    <property type="term" value="F:rRNA binding"/>
    <property type="evidence" value="ECO:0007669"/>
    <property type="project" value="UniProtKB-UniRule"/>
</dbReference>
<dbReference type="GO" id="GO:0003735">
    <property type="term" value="F:structural constituent of ribosome"/>
    <property type="evidence" value="ECO:0007669"/>
    <property type="project" value="InterPro"/>
</dbReference>
<dbReference type="GO" id="GO:0000027">
    <property type="term" value="P:ribosomal large subunit assembly"/>
    <property type="evidence" value="ECO:0007669"/>
    <property type="project" value="UniProtKB-UniRule"/>
</dbReference>
<dbReference type="GO" id="GO:0006412">
    <property type="term" value="P:translation"/>
    <property type="evidence" value="ECO:0007669"/>
    <property type="project" value="InterPro"/>
</dbReference>
<dbReference type="CDD" id="cd07026">
    <property type="entry name" value="Ribosomal_L20"/>
    <property type="match status" value="1"/>
</dbReference>
<dbReference type="FunFam" id="1.10.1900.20:FF:000001">
    <property type="entry name" value="50S ribosomal protein L20"/>
    <property type="match status" value="1"/>
</dbReference>
<dbReference type="Gene3D" id="6.10.160.10">
    <property type="match status" value="1"/>
</dbReference>
<dbReference type="Gene3D" id="1.10.1900.20">
    <property type="entry name" value="Ribosomal protein L20"/>
    <property type="match status" value="1"/>
</dbReference>
<dbReference type="HAMAP" id="MF_00382">
    <property type="entry name" value="Ribosomal_bL20"/>
    <property type="match status" value="1"/>
</dbReference>
<dbReference type="InterPro" id="IPR005813">
    <property type="entry name" value="Ribosomal_bL20"/>
</dbReference>
<dbReference type="InterPro" id="IPR049946">
    <property type="entry name" value="RIBOSOMAL_L20_CS"/>
</dbReference>
<dbReference type="InterPro" id="IPR035566">
    <property type="entry name" value="Ribosomal_protein_bL20_C"/>
</dbReference>
<dbReference type="NCBIfam" id="TIGR01032">
    <property type="entry name" value="rplT_bact"/>
    <property type="match status" value="1"/>
</dbReference>
<dbReference type="PANTHER" id="PTHR10986">
    <property type="entry name" value="39S RIBOSOMAL PROTEIN L20"/>
    <property type="match status" value="1"/>
</dbReference>
<dbReference type="Pfam" id="PF00453">
    <property type="entry name" value="Ribosomal_L20"/>
    <property type="match status" value="1"/>
</dbReference>
<dbReference type="PRINTS" id="PR00062">
    <property type="entry name" value="RIBOSOMALL20"/>
</dbReference>
<dbReference type="SUPFAM" id="SSF74731">
    <property type="entry name" value="Ribosomal protein L20"/>
    <property type="match status" value="1"/>
</dbReference>
<dbReference type="PROSITE" id="PS00937">
    <property type="entry name" value="RIBOSOMAL_L20"/>
    <property type="match status" value="1"/>
</dbReference>
<comment type="function">
    <text evidence="1">Binds directly to 23S ribosomal RNA and is necessary for the in vitro assembly process of the 50S ribosomal subunit. It is not involved in the protein synthesizing functions of that subunit (By similarity).</text>
</comment>
<comment type="subcellular location">
    <subcellularLocation>
        <location>Plastid</location>
        <location>Chloroplast</location>
    </subcellularLocation>
</comment>
<comment type="similarity">
    <text evidence="2">Belongs to the bacterial ribosomal protein bL20 family.</text>
</comment>
<protein>
    <recommendedName>
        <fullName evidence="2">Large ribosomal subunit protein bL20c</fullName>
    </recommendedName>
    <alternativeName>
        <fullName>50S ribosomal protein L20, chloroplastic</fullName>
    </alternativeName>
</protein>
<sequence length="116" mass="13606">MTRVKRGYVARKRRKNILTLTSGFQGTHSKLFRTANQQGMRALASSHRDRGKRKRNLRRLWITRVNAAARDNGISYNKLIEYLYKKKILLNRKILAQIAILDKFCFSTIIKNIITE</sequence>
<gene>
    <name type="primary">rpl20</name>
</gene>
<geneLocation type="chloroplast"/>
<proteinExistence type="inferred from homology"/>
<name>RK20_MARPO</name>